<sequence length="86" mass="10303">MENFDKTMKFDYEELPTQDVRDVLNNVYRTLDERGYNAVNQIVGYLLSGDPAYIPRQNEARNQIRHIDRDVIMEELVSYYLKEQNK</sequence>
<comment type="similarity">
    <text evidence="1">Belongs to the UPF0297 family.</text>
</comment>
<protein>
    <recommendedName>
        <fullName evidence="1">UPF0297 protein NWMN_1518</fullName>
    </recommendedName>
</protein>
<evidence type="ECO:0000255" key="1">
    <source>
        <dbReference type="HAMAP-Rule" id="MF_01507"/>
    </source>
</evidence>
<gene>
    <name type="ordered locus">NWMN_1518</name>
</gene>
<name>Y1518_STAAE</name>
<reference key="1">
    <citation type="journal article" date="2008" name="J. Bacteriol.">
        <title>Genome sequence of Staphylococcus aureus strain Newman and comparative analysis of staphylococcal genomes: polymorphism and evolution of two major pathogenicity islands.</title>
        <authorList>
            <person name="Baba T."/>
            <person name="Bae T."/>
            <person name="Schneewind O."/>
            <person name="Takeuchi F."/>
            <person name="Hiramatsu K."/>
        </authorList>
    </citation>
    <scope>NUCLEOTIDE SEQUENCE [LARGE SCALE GENOMIC DNA]</scope>
    <source>
        <strain>Newman</strain>
    </source>
</reference>
<proteinExistence type="inferred from homology"/>
<feature type="chain" id="PRO_1000073532" description="UPF0297 protein NWMN_1518">
    <location>
        <begin position="1"/>
        <end position="86"/>
    </location>
</feature>
<dbReference type="EMBL" id="AP009351">
    <property type="protein sequence ID" value="BAF67790.1"/>
    <property type="molecule type" value="Genomic_DNA"/>
</dbReference>
<dbReference type="RefSeq" id="WP_000426912.1">
    <property type="nucleotide sequence ID" value="NZ_JBBIAE010000001.1"/>
</dbReference>
<dbReference type="SMR" id="A6QHF8"/>
<dbReference type="KEGG" id="sae:NWMN_1518"/>
<dbReference type="HOGENOM" id="CLU_162466_0_0_9"/>
<dbReference type="Proteomes" id="UP000006386">
    <property type="component" value="Chromosome"/>
</dbReference>
<dbReference type="HAMAP" id="MF_01507">
    <property type="entry name" value="UPF0297"/>
    <property type="match status" value="1"/>
</dbReference>
<dbReference type="InterPro" id="IPR009309">
    <property type="entry name" value="IreB"/>
</dbReference>
<dbReference type="NCBIfam" id="NF003997">
    <property type="entry name" value="PRK05473.1"/>
    <property type="match status" value="1"/>
</dbReference>
<dbReference type="PANTHER" id="PTHR40067">
    <property type="entry name" value="UPF0297 PROTEIN YRZL"/>
    <property type="match status" value="1"/>
</dbReference>
<dbReference type="PANTHER" id="PTHR40067:SF1">
    <property type="entry name" value="UPF0297 PROTEIN YRZL"/>
    <property type="match status" value="1"/>
</dbReference>
<dbReference type="Pfam" id="PF06135">
    <property type="entry name" value="IreB"/>
    <property type="match status" value="1"/>
</dbReference>
<dbReference type="PIRSF" id="PIRSF037258">
    <property type="entry name" value="DUF965_bac"/>
    <property type="match status" value="1"/>
</dbReference>
<organism>
    <name type="scientific">Staphylococcus aureus (strain Newman)</name>
    <dbReference type="NCBI Taxonomy" id="426430"/>
    <lineage>
        <taxon>Bacteria</taxon>
        <taxon>Bacillati</taxon>
        <taxon>Bacillota</taxon>
        <taxon>Bacilli</taxon>
        <taxon>Bacillales</taxon>
        <taxon>Staphylococcaceae</taxon>
        <taxon>Staphylococcus</taxon>
    </lineage>
</organism>
<accession>A6QHF8</accession>